<evidence type="ECO:0000250" key="1"/>
<evidence type="ECO:0000255" key="2">
    <source>
        <dbReference type="PROSITE-ProRule" id="PRU10001"/>
    </source>
</evidence>
<evidence type="ECO:0000305" key="3"/>
<protein>
    <recommendedName>
        <fullName>3-oxoacyl-[acyl-carrier-protein] reductase FabG</fullName>
        <ecNumber>1.1.1.100</ecNumber>
    </recommendedName>
    <alternativeName>
        <fullName>3-ketoacyl-acyl carrier protein reductase</fullName>
    </alternativeName>
    <alternativeName>
        <fullName>Beta-Ketoacyl-acyl carrier protein reductase</fullName>
    </alternativeName>
    <alternativeName>
        <fullName>Beta-ketoacyl-ACP reductase</fullName>
    </alternativeName>
</protein>
<gene>
    <name type="primary">fabG</name>
    <name type="ordered locus">SF1097</name>
    <name type="ordered locus">S1177</name>
</gene>
<keyword id="KW-0106">Calcium</keyword>
<keyword id="KW-0275">Fatty acid biosynthesis</keyword>
<keyword id="KW-0276">Fatty acid metabolism</keyword>
<keyword id="KW-0444">Lipid biosynthesis</keyword>
<keyword id="KW-0443">Lipid metabolism</keyword>
<keyword id="KW-0479">Metal-binding</keyword>
<keyword id="KW-0521">NADP</keyword>
<keyword id="KW-0560">Oxidoreductase</keyword>
<keyword id="KW-1185">Reference proteome</keyword>
<feature type="chain" id="PRO_0000054682" description="3-oxoacyl-[acyl-carrier-protein] reductase FabG">
    <location>
        <begin position="1"/>
        <end position="244"/>
    </location>
</feature>
<feature type="active site" description="Proton acceptor" evidence="2">
    <location>
        <position position="151"/>
    </location>
</feature>
<feature type="binding site" evidence="1">
    <location>
        <begin position="12"/>
        <end position="15"/>
    </location>
    <ligand>
        <name>NADP(+)</name>
        <dbReference type="ChEBI" id="CHEBI:58349"/>
    </ligand>
</feature>
<feature type="binding site" evidence="1">
    <location>
        <position position="37"/>
    </location>
    <ligand>
        <name>NADP(+)</name>
        <dbReference type="ChEBI" id="CHEBI:58349"/>
    </ligand>
</feature>
<feature type="binding site" evidence="1">
    <location>
        <position position="50"/>
    </location>
    <ligand>
        <name>Ca(2+)</name>
        <dbReference type="ChEBI" id="CHEBI:29108"/>
        <label>1</label>
        <note>ligand shared between dimeric partners</note>
    </ligand>
</feature>
<feature type="binding site" evidence="1">
    <location>
        <position position="53"/>
    </location>
    <ligand>
        <name>Ca(2+)</name>
        <dbReference type="ChEBI" id="CHEBI:29108"/>
        <label>1</label>
        <note>ligand shared between dimeric partners</note>
    </ligand>
</feature>
<feature type="binding site" evidence="1">
    <location>
        <begin position="59"/>
        <end position="60"/>
    </location>
    <ligand>
        <name>NADP(+)</name>
        <dbReference type="ChEBI" id="CHEBI:58349"/>
    </ligand>
</feature>
<feature type="binding site" evidence="1">
    <location>
        <position position="86"/>
    </location>
    <ligand>
        <name>NADP(+)</name>
        <dbReference type="ChEBI" id="CHEBI:58349"/>
    </ligand>
</feature>
<feature type="binding site" evidence="1">
    <location>
        <position position="138"/>
    </location>
    <ligand>
        <name>substrate</name>
    </ligand>
</feature>
<feature type="binding site" evidence="1">
    <location>
        <position position="145"/>
    </location>
    <ligand>
        <name>Ca(2+)</name>
        <dbReference type="ChEBI" id="CHEBI:29108"/>
        <label>2</label>
    </ligand>
</feature>
<feature type="binding site" evidence="1">
    <location>
        <begin position="151"/>
        <end position="155"/>
    </location>
    <ligand>
        <name>NADP(+)</name>
        <dbReference type="ChEBI" id="CHEBI:58349"/>
    </ligand>
</feature>
<feature type="binding site" evidence="1">
    <location>
        <position position="184"/>
    </location>
    <ligand>
        <name>NADP(+)</name>
        <dbReference type="ChEBI" id="CHEBI:58349"/>
    </ligand>
</feature>
<feature type="binding site" evidence="1">
    <location>
        <position position="233"/>
    </location>
    <ligand>
        <name>Ca(2+)</name>
        <dbReference type="ChEBI" id="CHEBI:29108"/>
        <label>3</label>
        <note>ligand shared between dimeric partners</note>
    </ligand>
</feature>
<feature type="binding site" evidence="1">
    <location>
        <position position="234"/>
    </location>
    <ligand>
        <name>Ca(2+)</name>
        <dbReference type="ChEBI" id="CHEBI:29108"/>
        <label>3</label>
        <note>ligand shared between dimeric partners</note>
    </ligand>
</feature>
<comment type="function">
    <text evidence="1">Catalyzes the NADPH-dependent reduction of beta-ketoacyl-ACP substrates to beta-hydroxyacyl-ACP products, the first reductive step in the elongation cycle of fatty acid biosynthesis.</text>
</comment>
<comment type="catalytic activity">
    <reaction>
        <text>a (3R)-hydroxyacyl-[ACP] + NADP(+) = a 3-oxoacyl-[ACP] + NADPH + H(+)</text>
        <dbReference type="Rhea" id="RHEA:17397"/>
        <dbReference type="Rhea" id="RHEA-COMP:9916"/>
        <dbReference type="Rhea" id="RHEA-COMP:9945"/>
        <dbReference type="ChEBI" id="CHEBI:15378"/>
        <dbReference type="ChEBI" id="CHEBI:57783"/>
        <dbReference type="ChEBI" id="CHEBI:58349"/>
        <dbReference type="ChEBI" id="CHEBI:78776"/>
        <dbReference type="ChEBI" id="CHEBI:78827"/>
        <dbReference type="EC" id="1.1.1.100"/>
    </reaction>
</comment>
<comment type="pathway">
    <text>Lipid metabolism; fatty acid biosynthesis.</text>
</comment>
<comment type="subunit">
    <text evidence="1">Homotetramer.</text>
</comment>
<comment type="miscellaneous">
    <text evidence="1">Calcium ions stabilize the structure, and may inhibit FabG activity by obstructing access to the active site.</text>
</comment>
<comment type="similarity">
    <text evidence="3">Belongs to the short-chain dehydrogenases/reductases (SDR) family.</text>
</comment>
<accession>P0AEK3</accession>
<accession>P25716</accession>
<accession>P78221</accession>
<accession>Q47202</accession>
<name>FABG_SHIFL</name>
<sequence>MNFEGKIALVTGASRGIGRAIAETLAARGAKVIGTATSENGAQAISDYLGANGKGLMLNVTDPASIESVLEKIRAEFGEVDILVNNAGITRDNLLMRMKDEEWNDIIETNLSSVFRLSKAVMRAMMKKRHGRIITIGSVVGTMGNGGQANYAAAKAGLIGFSKSLAREVASRGITVNVVAPGFIETDMTRALSDDQRAGILAQVPAGRLGGAQEIANAVAFLASDEAAYITGETLHVNGGMYMV</sequence>
<dbReference type="EC" id="1.1.1.100"/>
<dbReference type="EMBL" id="AE005674">
    <property type="protein sequence ID" value="AAN42716.1"/>
    <property type="molecule type" value="Genomic_DNA"/>
</dbReference>
<dbReference type="EMBL" id="AE014073">
    <property type="protein sequence ID" value="AAP16604.1"/>
    <property type="molecule type" value="Genomic_DNA"/>
</dbReference>
<dbReference type="RefSeq" id="NP_707009.1">
    <property type="nucleotide sequence ID" value="NC_004337.2"/>
</dbReference>
<dbReference type="RefSeq" id="WP_001008535.1">
    <property type="nucleotide sequence ID" value="NZ_WPGW01000001.1"/>
</dbReference>
<dbReference type="SMR" id="P0AEK3"/>
<dbReference type="STRING" id="198214.SF1097"/>
<dbReference type="PaxDb" id="198214-SF1097"/>
<dbReference type="GeneID" id="1026267"/>
<dbReference type="GeneID" id="93776315"/>
<dbReference type="KEGG" id="sfl:SF1097"/>
<dbReference type="KEGG" id="sfx:S1177"/>
<dbReference type="PATRIC" id="fig|198214.7.peg.1285"/>
<dbReference type="HOGENOM" id="CLU_010194_1_3_6"/>
<dbReference type="UniPathway" id="UPA00094"/>
<dbReference type="Proteomes" id="UP000001006">
    <property type="component" value="Chromosome"/>
</dbReference>
<dbReference type="Proteomes" id="UP000002673">
    <property type="component" value="Chromosome"/>
</dbReference>
<dbReference type="GO" id="GO:0004316">
    <property type="term" value="F:3-oxoacyl-[acyl-carrier-protein] reductase (NADPH) activity"/>
    <property type="evidence" value="ECO:0000250"/>
    <property type="project" value="UniProtKB"/>
</dbReference>
<dbReference type="GO" id="GO:0046872">
    <property type="term" value="F:metal ion binding"/>
    <property type="evidence" value="ECO:0007669"/>
    <property type="project" value="UniProtKB-KW"/>
</dbReference>
<dbReference type="GO" id="GO:0051287">
    <property type="term" value="F:NAD binding"/>
    <property type="evidence" value="ECO:0007669"/>
    <property type="project" value="InterPro"/>
</dbReference>
<dbReference type="GO" id="GO:0050661">
    <property type="term" value="F:NADP binding"/>
    <property type="evidence" value="ECO:0000250"/>
    <property type="project" value="UniProtKB"/>
</dbReference>
<dbReference type="GO" id="GO:0030497">
    <property type="term" value="P:fatty acid elongation"/>
    <property type="evidence" value="ECO:0000250"/>
    <property type="project" value="UniProtKB"/>
</dbReference>
<dbReference type="CDD" id="cd05333">
    <property type="entry name" value="BKR_SDR_c"/>
    <property type="match status" value="1"/>
</dbReference>
<dbReference type="FunFam" id="3.40.50.720:FF:000037">
    <property type="entry name" value="3-oxoacyl-[acyl-carrier-protein] reductase FabG"/>
    <property type="match status" value="1"/>
</dbReference>
<dbReference type="Gene3D" id="3.40.50.720">
    <property type="entry name" value="NAD(P)-binding Rossmann-like Domain"/>
    <property type="match status" value="1"/>
</dbReference>
<dbReference type="InterPro" id="IPR011284">
    <property type="entry name" value="3oxo_ACP_reduc"/>
</dbReference>
<dbReference type="InterPro" id="IPR036291">
    <property type="entry name" value="NAD(P)-bd_dom_sf"/>
</dbReference>
<dbReference type="InterPro" id="IPR020904">
    <property type="entry name" value="Sc_DH/Rdtase_CS"/>
</dbReference>
<dbReference type="InterPro" id="IPR050259">
    <property type="entry name" value="SDR"/>
</dbReference>
<dbReference type="InterPro" id="IPR002347">
    <property type="entry name" value="SDR_fam"/>
</dbReference>
<dbReference type="NCBIfam" id="TIGR01830">
    <property type="entry name" value="3oxo_ACP_reduc"/>
    <property type="match status" value="1"/>
</dbReference>
<dbReference type="NCBIfam" id="NF004197">
    <property type="entry name" value="PRK05653.1-1"/>
    <property type="match status" value="1"/>
</dbReference>
<dbReference type="NCBIfam" id="NF005559">
    <property type="entry name" value="PRK07231.1"/>
    <property type="match status" value="1"/>
</dbReference>
<dbReference type="NCBIfam" id="NF009464">
    <property type="entry name" value="PRK12824.1"/>
    <property type="match status" value="1"/>
</dbReference>
<dbReference type="NCBIfam" id="NF009466">
    <property type="entry name" value="PRK12826.1-2"/>
    <property type="match status" value="1"/>
</dbReference>
<dbReference type="PANTHER" id="PTHR42879">
    <property type="entry name" value="3-OXOACYL-(ACYL-CARRIER-PROTEIN) REDUCTASE"/>
    <property type="match status" value="1"/>
</dbReference>
<dbReference type="PANTHER" id="PTHR42879:SF2">
    <property type="entry name" value="3-OXOACYL-[ACYL-CARRIER-PROTEIN] REDUCTASE FABG"/>
    <property type="match status" value="1"/>
</dbReference>
<dbReference type="Pfam" id="PF13561">
    <property type="entry name" value="adh_short_C2"/>
    <property type="match status" value="1"/>
</dbReference>
<dbReference type="PRINTS" id="PR00081">
    <property type="entry name" value="GDHRDH"/>
</dbReference>
<dbReference type="PRINTS" id="PR00080">
    <property type="entry name" value="SDRFAMILY"/>
</dbReference>
<dbReference type="SMART" id="SM00822">
    <property type="entry name" value="PKS_KR"/>
    <property type="match status" value="1"/>
</dbReference>
<dbReference type="SUPFAM" id="SSF51735">
    <property type="entry name" value="NAD(P)-binding Rossmann-fold domains"/>
    <property type="match status" value="1"/>
</dbReference>
<dbReference type="PROSITE" id="PS00061">
    <property type="entry name" value="ADH_SHORT"/>
    <property type="match status" value="1"/>
</dbReference>
<reference key="1">
    <citation type="journal article" date="2002" name="Nucleic Acids Res.">
        <title>Genome sequence of Shigella flexneri 2a: insights into pathogenicity through comparison with genomes of Escherichia coli K12 and O157.</title>
        <authorList>
            <person name="Jin Q."/>
            <person name="Yuan Z."/>
            <person name="Xu J."/>
            <person name="Wang Y."/>
            <person name="Shen Y."/>
            <person name="Lu W."/>
            <person name="Wang J."/>
            <person name="Liu H."/>
            <person name="Yang J."/>
            <person name="Yang F."/>
            <person name="Zhang X."/>
            <person name="Zhang J."/>
            <person name="Yang G."/>
            <person name="Wu H."/>
            <person name="Qu D."/>
            <person name="Dong J."/>
            <person name="Sun L."/>
            <person name="Xue Y."/>
            <person name="Zhao A."/>
            <person name="Gao Y."/>
            <person name="Zhu J."/>
            <person name="Kan B."/>
            <person name="Ding K."/>
            <person name="Chen S."/>
            <person name="Cheng H."/>
            <person name="Yao Z."/>
            <person name="He B."/>
            <person name="Chen R."/>
            <person name="Ma D."/>
            <person name="Qiang B."/>
            <person name="Wen Y."/>
            <person name="Hou Y."/>
            <person name="Yu J."/>
        </authorList>
    </citation>
    <scope>NUCLEOTIDE SEQUENCE [LARGE SCALE GENOMIC DNA]</scope>
    <source>
        <strain>301 / Serotype 2a</strain>
    </source>
</reference>
<reference key="2">
    <citation type="journal article" date="2003" name="Infect. Immun.">
        <title>Complete genome sequence and comparative genomics of Shigella flexneri serotype 2a strain 2457T.</title>
        <authorList>
            <person name="Wei J."/>
            <person name="Goldberg M.B."/>
            <person name="Burland V."/>
            <person name="Venkatesan M.M."/>
            <person name="Deng W."/>
            <person name="Fournier G."/>
            <person name="Mayhew G.F."/>
            <person name="Plunkett G. III"/>
            <person name="Rose D.J."/>
            <person name="Darling A."/>
            <person name="Mau B."/>
            <person name="Perna N.T."/>
            <person name="Payne S.M."/>
            <person name="Runyen-Janecky L.J."/>
            <person name="Zhou S."/>
            <person name="Schwartz D.C."/>
            <person name="Blattner F.R."/>
        </authorList>
    </citation>
    <scope>NUCLEOTIDE SEQUENCE [LARGE SCALE GENOMIC DNA]</scope>
    <source>
        <strain>ATCC 700930 / 2457T / Serotype 2a</strain>
    </source>
</reference>
<organism>
    <name type="scientific">Shigella flexneri</name>
    <dbReference type="NCBI Taxonomy" id="623"/>
    <lineage>
        <taxon>Bacteria</taxon>
        <taxon>Pseudomonadati</taxon>
        <taxon>Pseudomonadota</taxon>
        <taxon>Gammaproteobacteria</taxon>
        <taxon>Enterobacterales</taxon>
        <taxon>Enterobacteriaceae</taxon>
        <taxon>Shigella</taxon>
    </lineage>
</organism>
<proteinExistence type="inferred from homology"/>